<gene>
    <name evidence="7" type="primary">brun</name>
    <name evidence="5" type="synonym">bru</name>
    <name evidence="7" type="ORF">CG2478</name>
</gene>
<protein>
    <recommendedName>
        <fullName evidence="5">Protein brunelleschi</fullName>
    </recommendedName>
    <alternativeName>
        <fullName>NIK- and IKBKB-binding protein</fullName>
    </alternativeName>
</protein>
<dbReference type="EMBL" id="AE014134">
    <property type="protein sequence ID" value="AAF53907.2"/>
    <property type="molecule type" value="Genomic_DNA"/>
</dbReference>
<dbReference type="EMBL" id="BT023878">
    <property type="protein sequence ID" value="ABA81812.1"/>
    <property type="molecule type" value="mRNA"/>
</dbReference>
<dbReference type="EMBL" id="AY051548">
    <property type="protein sequence ID" value="AAK92972.1"/>
    <property type="status" value="ALT_FRAME"/>
    <property type="molecule type" value="mRNA"/>
</dbReference>
<dbReference type="RefSeq" id="NP_610044.2">
    <property type="nucleotide sequence ID" value="NM_136200.3"/>
</dbReference>
<dbReference type="SMR" id="Q9VIL0"/>
<dbReference type="BioGRID" id="61289">
    <property type="interactions" value="6"/>
</dbReference>
<dbReference type="ComplexPortal" id="CPX-2271">
    <property type="entry name" value="TRAPPII complex"/>
</dbReference>
<dbReference type="FunCoup" id="Q9VIL0">
    <property type="interactions" value="2060"/>
</dbReference>
<dbReference type="STRING" id="7227.FBpp0080933"/>
<dbReference type="iPTMnet" id="Q9VIL0"/>
<dbReference type="PaxDb" id="7227-FBpp0080933"/>
<dbReference type="EnsemblMetazoa" id="FBtr0081403">
    <property type="protein sequence ID" value="FBpp0080933"/>
    <property type="gene ID" value="FBgn0261787"/>
</dbReference>
<dbReference type="GeneID" id="35325"/>
<dbReference type="KEGG" id="dme:Dmel_CG2478"/>
<dbReference type="UCSC" id="CG2478-RA">
    <property type="organism name" value="d. melanogaster"/>
</dbReference>
<dbReference type="AGR" id="FB:FBgn0261787"/>
<dbReference type="CTD" id="35325"/>
<dbReference type="FlyBase" id="FBgn0261787">
    <property type="gene designation" value="brun"/>
</dbReference>
<dbReference type="VEuPathDB" id="VectorBase:FBgn0261787"/>
<dbReference type="eggNOG" id="KOG1953">
    <property type="taxonomic scope" value="Eukaryota"/>
</dbReference>
<dbReference type="HOGENOM" id="CLU_004738_0_0_1"/>
<dbReference type="InParanoid" id="Q9VIL0"/>
<dbReference type="OMA" id="HHSCLLV"/>
<dbReference type="OrthoDB" id="27962at2759"/>
<dbReference type="PhylomeDB" id="Q9VIL0"/>
<dbReference type="Reactome" id="R-DME-204005">
    <property type="pathway name" value="COPII-mediated vesicle transport"/>
</dbReference>
<dbReference type="Reactome" id="R-DME-8876198">
    <property type="pathway name" value="RAB GEFs exchange GTP for GDP on RABs"/>
</dbReference>
<dbReference type="BioGRID-ORCS" id="35325">
    <property type="hits" value="0 hits in 1 CRISPR screen"/>
</dbReference>
<dbReference type="ChiTaRS" id="bru">
    <property type="organism name" value="fly"/>
</dbReference>
<dbReference type="GenomeRNAi" id="35325"/>
<dbReference type="PRO" id="PR:Q9VIL0"/>
<dbReference type="Proteomes" id="UP000000803">
    <property type="component" value="Chromosome 2L"/>
</dbReference>
<dbReference type="Bgee" id="FBgn0261787">
    <property type="expression patterns" value="Expressed in egg cell and 94 other cell types or tissues"/>
</dbReference>
<dbReference type="ExpressionAtlas" id="Q9VIL0">
    <property type="expression patterns" value="baseline and differential"/>
</dbReference>
<dbReference type="GO" id="GO:0036063">
    <property type="term" value="C:acroblast"/>
    <property type="evidence" value="ECO:0000314"/>
    <property type="project" value="FlyBase"/>
</dbReference>
<dbReference type="GO" id="GO:0005737">
    <property type="term" value="C:cytoplasm"/>
    <property type="evidence" value="ECO:0000314"/>
    <property type="project" value="FlyBase"/>
</dbReference>
<dbReference type="GO" id="GO:0005794">
    <property type="term" value="C:Golgi apparatus"/>
    <property type="evidence" value="ECO:0000314"/>
    <property type="project" value="FlyBase"/>
</dbReference>
<dbReference type="GO" id="GO:0005802">
    <property type="term" value="C:trans-Golgi network"/>
    <property type="evidence" value="ECO:0000318"/>
    <property type="project" value="GO_Central"/>
</dbReference>
<dbReference type="GO" id="GO:0030008">
    <property type="term" value="C:TRAPP complex"/>
    <property type="evidence" value="ECO:0000250"/>
    <property type="project" value="FlyBase"/>
</dbReference>
<dbReference type="GO" id="GO:1990071">
    <property type="term" value="C:TRAPPII protein complex"/>
    <property type="evidence" value="ECO:0000314"/>
    <property type="project" value="FlyBase"/>
</dbReference>
<dbReference type="GO" id="GO:0000916">
    <property type="term" value="P:actomyosin contractile ring contraction"/>
    <property type="evidence" value="ECO:0000315"/>
    <property type="project" value="FlyBase"/>
</dbReference>
<dbReference type="GO" id="GO:0048193">
    <property type="term" value="P:Golgi vesicle transport"/>
    <property type="evidence" value="ECO:0000305"/>
    <property type="project" value="FlyBase"/>
</dbReference>
<dbReference type="GO" id="GO:0006891">
    <property type="term" value="P:intra-Golgi vesicle-mediated transport"/>
    <property type="evidence" value="ECO:0000250"/>
    <property type="project" value="FlyBase"/>
</dbReference>
<dbReference type="GO" id="GO:0007112">
    <property type="term" value="P:male meiosis cytokinesis"/>
    <property type="evidence" value="ECO:0000315"/>
    <property type="project" value="FlyBase"/>
</dbReference>
<dbReference type="GO" id="GO:0007110">
    <property type="term" value="P:meiosis I cytokinesis"/>
    <property type="evidence" value="ECO:0000315"/>
    <property type="project" value="FlyBase"/>
</dbReference>
<dbReference type="GO" id="GO:0007111">
    <property type="term" value="P:meiosis II cytokinesis"/>
    <property type="evidence" value="ECO:0000315"/>
    <property type="project" value="FlyBase"/>
</dbReference>
<dbReference type="GO" id="GO:0000212">
    <property type="term" value="P:meiotic spindle organization"/>
    <property type="evidence" value="ECO:0000315"/>
    <property type="project" value="FlyBase"/>
</dbReference>
<dbReference type="GO" id="GO:0048137">
    <property type="term" value="P:spermatocyte division"/>
    <property type="evidence" value="ECO:0000315"/>
    <property type="project" value="FlyBase"/>
</dbReference>
<dbReference type="InterPro" id="IPR013935">
    <property type="entry name" value="TRAPP_II_complex_Trs120"/>
</dbReference>
<dbReference type="PANTHER" id="PTHR21512">
    <property type="entry name" value="TRAFFICKING PROTEIN PARTICLE COMPLEX SUBUNIT 9"/>
    <property type="match status" value="1"/>
</dbReference>
<dbReference type="PANTHER" id="PTHR21512:SF5">
    <property type="entry name" value="TRAFFICKING PROTEIN PARTICLE COMPLEX SUBUNIT 9"/>
    <property type="match status" value="1"/>
</dbReference>
<dbReference type="Pfam" id="PF08626">
    <property type="entry name" value="TRAPPC9-Trs120"/>
    <property type="match status" value="2"/>
</dbReference>
<organism>
    <name type="scientific">Drosophila melanogaster</name>
    <name type="common">Fruit fly</name>
    <dbReference type="NCBI Taxonomy" id="7227"/>
    <lineage>
        <taxon>Eukaryota</taxon>
        <taxon>Metazoa</taxon>
        <taxon>Ecdysozoa</taxon>
        <taxon>Arthropoda</taxon>
        <taxon>Hexapoda</taxon>
        <taxon>Insecta</taxon>
        <taxon>Pterygota</taxon>
        <taxon>Neoptera</taxon>
        <taxon>Endopterygota</taxon>
        <taxon>Diptera</taxon>
        <taxon>Brachycera</taxon>
        <taxon>Muscomorpha</taxon>
        <taxon>Ephydroidea</taxon>
        <taxon>Drosophilidae</taxon>
        <taxon>Drosophila</taxon>
        <taxon>Sophophora</taxon>
    </lineage>
</organism>
<reference key="1">
    <citation type="journal article" date="2000" name="Science">
        <title>The genome sequence of Drosophila melanogaster.</title>
        <authorList>
            <person name="Adams M.D."/>
            <person name="Celniker S.E."/>
            <person name="Holt R.A."/>
            <person name="Evans C.A."/>
            <person name="Gocayne J.D."/>
            <person name="Amanatides P.G."/>
            <person name="Scherer S.E."/>
            <person name="Li P.W."/>
            <person name="Hoskins R.A."/>
            <person name="Galle R.F."/>
            <person name="George R.A."/>
            <person name="Lewis S.E."/>
            <person name="Richards S."/>
            <person name="Ashburner M."/>
            <person name="Henderson S.N."/>
            <person name="Sutton G.G."/>
            <person name="Wortman J.R."/>
            <person name="Yandell M.D."/>
            <person name="Zhang Q."/>
            <person name="Chen L.X."/>
            <person name="Brandon R.C."/>
            <person name="Rogers Y.-H.C."/>
            <person name="Blazej R.G."/>
            <person name="Champe M."/>
            <person name="Pfeiffer B.D."/>
            <person name="Wan K.H."/>
            <person name="Doyle C."/>
            <person name="Baxter E.G."/>
            <person name="Helt G."/>
            <person name="Nelson C.R."/>
            <person name="Miklos G.L.G."/>
            <person name="Abril J.F."/>
            <person name="Agbayani A."/>
            <person name="An H.-J."/>
            <person name="Andrews-Pfannkoch C."/>
            <person name="Baldwin D."/>
            <person name="Ballew R.M."/>
            <person name="Basu A."/>
            <person name="Baxendale J."/>
            <person name="Bayraktaroglu L."/>
            <person name="Beasley E.M."/>
            <person name="Beeson K.Y."/>
            <person name="Benos P.V."/>
            <person name="Berman B.P."/>
            <person name="Bhandari D."/>
            <person name="Bolshakov S."/>
            <person name="Borkova D."/>
            <person name="Botchan M.R."/>
            <person name="Bouck J."/>
            <person name="Brokstein P."/>
            <person name="Brottier P."/>
            <person name="Burtis K.C."/>
            <person name="Busam D.A."/>
            <person name="Butler H."/>
            <person name="Cadieu E."/>
            <person name="Center A."/>
            <person name="Chandra I."/>
            <person name="Cherry J.M."/>
            <person name="Cawley S."/>
            <person name="Dahlke C."/>
            <person name="Davenport L.B."/>
            <person name="Davies P."/>
            <person name="de Pablos B."/>
            <person name="Delcher A."/>
            <person name="Deng Z."/>
            <person name="Mays A.D."/>
            <person name="Dew I."/>
            <person name="Dietz S.M."/>
            <person name="Dodson K."/>
            <person name="Doup L.E."/>
            <person name="Downes M."/>
            <person name="Dugan-Rocha S."/>
            <person name="Dunkov B.C."/>
            <person name="Dunn P."/>
            <person name="Durbin K.J."/>
            <person name="Evangelista C.C."/>
            <person name="Ferraz C."/>
            <person name="Ferriera S."/>
            <person name="Fleischmann W."/>
            <person name="Fosler C."/>
            <person name="Gabrielian A.E."/>
            <person name="Garg N.S."/>
            <person name="Gelbart W.M."/>
            <person name="Glasser K."/>
            <person name="Glodek A."/>
            <person name="Gong F."/>
            <person name="Gorrell J.H."/>
            <person name="Gu Z."/>
            <person name="Guan P."/>
            <person name="Harris M."/>
            <person name="Harris N.L."/>
            <person name="Harvey D.A."/>
            <person name="Heiman T.J."/>
            <person name="Hernandez J.R."/>
            <person name="Houck J."/>
            <person name="Hostin D."/>
            <person name="Houston K.A."/>
            <person name="Howland T.J."/>
            <person name="Wei M.-H."/>
            <person name="Ibegwam C."/>
            <person name="Jalali M."/>
            <person name="Kalush F."/>
            <person name="Karpen G.H."/>
            <person name="Ke Z."/>
            <person name="Kennison J.A."/>
            <person name="Ketchum K.A."/>
            <person name="Kimmel B.E."/>
            <person name="Kodira C.D."/>
            <person name="Kraft C.L."/>
            <person name="Kravitz S."/>
            <person name="Kulp D."/>
            <person name="Lai Z."/>
            <person name="Lasko P."/>
            <person name="Lei Y."/>
            <person name="Levitsky A.A."/>
            <person name="Li J.H."/>
            <person name="Li Z."/>
            <person name="Liang Y."/>
            <person name="Lin X."/>
            <person name="Liu X."/>
            <person name="Mattei B."/>
            <person name="McIntosh T.C."/>
            <person name="McLeod M.P."/>
            <person name="McPherson D."/>
            <person name="Merkulov G."/>
            <person name="Milshina N.V."/>
            <person name="Mobarry C."/>
            <person name="Morris J."/>
            <person name="Moshrefi A."/>
            <person name="Mount S.M."/>
            <person name="Moy M."/>
            <person name="Murphy B."/>
            <person name="Murphy L."/>
            <person name="Muzny D.M."/>
            <person name="Nelson D.L."/>
            <person name="Nelson D.R."/>
            <person name="Nelson K.A."/>
            <person name="Nixon K."/>
            <person name="Nusskern D.R."/>
            <person name="Pacleb J.M."/>
            <person name="Palazzolo M."/>
            <person name="Pittman G.S."/>
            <person name="Pan S."/>
            <person name="Pollard J."/>
            <person name="Puri V."/>
            <person name="Reese M.G."/>
            <person name="Reinert K."/>
            <person name="Remington K."/>
            <person name="Saunders R.D.C."/>
            <person name="Scheeler F."/>
            <person name="Shen H."/>
            <person name="Shue B.C."/>
            <person name="Siden-Kiamos I."/>
            <person name="Simpson M."/>
            <person name="Skupski M.P."/>
            <person name="Smith T.J."/>
            <person name="Spier E."/>
            <person name="Spradling A.C."/>
            <person name="Stapleton M."/>
            <person name="Strong R."/>
            <person name="Sun E."/>
            <person name="Svirskas R."/>
            <person name="Tector C."/>
            <person name="Turner R."/>
            <person name="Venter E."/>
            <person name="Wang A.H."/>
            <person name="Wang X."/>
            <person name="Wang Z.-Y."/>
            <person name="Wassarman D.A."/>
            <person name="Weinstock G.M."/>
            <person name="Weissenbach J."/>
            <person name="Williams S.M."/>
            <person name="Woodage T."/>
            <person name="Worley K.C."/>
            <person name="Wu D."/>
            <person name="Yang S."/>
            <person name="Yao Q.A."/>
            <person name="Ye J."/>
            <person name="Yeh R.-F."/>
            <person name="Zaveri J.S."/>
            <person name="Zhan M."/>
            <person name="Zhang G."/>
            <person name="Zhao Q."/>
            <person name="Zheng L."/>
            <person name="Zheng X.H."/>
            <person name="Zhong F.N."/>
            <person name="Zhong W."/>
            <person name="Zhou X."/>
            <person name="Zhu S.C."/>
            <person name="Zhu X."/>
            <person name="Smith H.O."/>
            <person name="Gibbs R.A."/>
            <person name="Myers E.W."/>
            <person name="Rubin G.M."/>
            <person name="Venter J.C."/>
        </authorList>
    </citation>
    <scope>NUCLEOTIDE SEQUENCE [LARGE SCALE GENOMIC DNA]</scope>
    <source>
        <strain>Berkeley</strain>
    </source>
</reference>
<reference key="2">
    <citation type="journal article" date="2002" name="Genome Biol.">
        <title>Annotation of the Drosophila melanogaster euchromatic genome: a systematic review.</title>
        <authorList>
            <person name="Misra S."/>
            <person name="Crosby M.A."/>
            <person name="Mungall C.J."/>
            <person name="Matthews B.B."/>
            <person name="Campbell K.S."/>
            <person name="Hradecky P."/>
            <person name="Huang Y."/>
            <person name="Kaminker J.S."/>
            <person name="Millburn G.H."/>
            <person name="Prochnik S.E."/>
            <person name="Smith C.D."/>
            <person name="Tupy J.L."/>
            <person name="Whitfield E.J."/>
            <person name="Bayraktaroglu L."/>
            <person name="Berman B.P."/>
            <person name="Bettencourt B.R."/>
            <person name="Celniker S.E."/>
            <person name="de Grey A.D.N.J."/>
            <person name="Drysdale R.A."/>
            <person name="Harris N.L."/>
            <person name="Richter J."/>
            <person name="Russo S."/>
            <person name="Schroeder A.J."/>
            <person name="Shu S.Q."/>
            <person name="Stapleton M."/>
            <person name="Yamada C."/>
            <person name="Ashburner M."/>
            <person name="Gelbart W.M."/>
            <person name="Rubin G.M."/>
            <person name="Lewis S.E."/>
        </authorList>
    </citation>
    <scope>GENOME REANNOTATION</scope>
    <source>
        <strain>Berkeley</strain>
    </source>
</reference>
<reference key="3">
    <citation type="submission" date="2005-10" db="EMBL/GenBank/DDBJ databases">
        <authorList>
            <person name="Stapleton M."/>
            <person name="Carlson J.W."/>
            <person name="Chavez C."/>
            <person name="Frise E."/>
            <person name="George R.A."/>
            <person name="Pacleb J.M."/>
            <person name="Park S."/>
            <person name="Wan K.H."/>
            <person name="Yu C."/>
            <person name="Celniker S.E."/>
        </authorList>
    </citation>
    <scope>NUCLEOTIDE SEQUENCE [LARGE SCALE MRNA]</scope>
    <source>
        <strain>Berkeley</strain>
        <tissue>Embryo</tissue>
    </source>
</reference>
<reference key="4">
    <citation type="journal article" date="2002" name="Genome Biol.">
        <title>A Drosophila full-length cDNA resource.</title>
        <authorList>
            <person name="Stapleton M."/>
            <person name="Carlson J.W."/>
            <person name="Brokstein P."/>
            <person name="Yu C."/>
            <person name="Champe M."/>
            <person name="George R.A."/>
            <person name="Guarin H."/>
            <person name="Kronmiller B."/>
            <person name="Pacleb J.M."/>
            <person name="Park S."/>
            <person name="Wan K.H."/>
            <person name="Rubin G.M."/>
            <person name="Celniker S.E."/>
        </authorList>
    </citation>
    <scope>NUCLEOTIDE SEQUENCE [LARGE SCALE MRNA] OF 322-1320</scope>
    <source>
        <strain>Berkeley</strain>
        <tissue>Head</tissue>
    </source>
</reference>
<reference key="5">
    <citation type="journal article" date="2008" name="J. Proteome Res.">
        <title>Phosphoproteome analysis of Drosophila melanogaster embryos.</title>
        <authorList>
            <person name="Zhai B."/>
            <person name="Villen J."/>
            <person name="Beausoleil S.A."/>
            <person name="Mintseris J."/>
            <person name="Gygi S.P."/>
        </authorList>
    </citation>
    <scope>PHOSPHORYLATION [LARGE SCALE ANALYSIS] AT SER-317 AND THR-329</scope>
    <scope>IDENTIFICATION BY MASS SPECTROMETRY</scope>
    <source>
        <tissue>Embryo</tissue>
    </source>
</reference>
<reference key="6">
    <citation type="journal article" date="2007" name="Mol. Biosyst.">
        <title>An integrated chemical, mass spectrometric and computational strategy for (quantitative) phosphoproteomics: application to Drosophila melanogaster Kc167 cells.</title>
        <authorList>
            <person name="Bodenmiller B."/>
            <person name="Mueller L.N."/>
            <person name="Pedrioli P.G.A."/>
            <person name="Pflieger D."/>
            <person name="Juenger M.A."/>
            <person name="Eng J.K."/>
            <person name="Aebersold R."/>
            <person name="Tao W.A."/>
        </authorList>
    </citation>
    <scope>PHOSPHORYLATION [LARGE SCALE ANALYSIS] AT SER-672</scope>
    <scope>IDENTIFICATION BY MASS SPECTROMETRY</scope>
</reference>
<reference key="7">
    <citation type="journal article" date="2009" name="J. Cell Sci.">
        <title>TRAPPII is required for cleavage furrow ingression and localization of Rab11 in dividing male meiotic cells of Drosophila.</title>
        <authorList>
            <person name="Robinett C.C."/>
            <person name="Giansanti M.G."/>
            <person name="Gatti M."/>
            <person name="Fuller M.T."/>
        </authorList>
    </citation>
    <scope>FUNCTION</scope>
    <scope>SUBCELLULAR LOCATION</scope>
    <scope>DEVELOPMENTAL STAGE</scope>
    <scope>DISRUPTION PHENOTYPE</scope>
</reference>
<comment type="function">
    <text evidence="4">Cooperates with Rab11 and fwd/PI4K to mediate the flow of membrane through the Golgi, which is required to support cleavage furrow ingression, therefore promoting cytokinesis in male meiotic cells.</text>
</comment>
<comment type="subunit">
    <text>May be part of the multisubunit TRAPP (transport protein particle) complex.</text>
</comment>
<comment type="subcellular location">
    <subcellularLocation>
        <location evidence="4">Cytoplasm</location>
    </subcellularLocation>
    <subcellularLocation>
        <location evidence="4">Golgi apparatus</location>
    </subcellularLocation>
    <text>Specific to spermatocytes.</text>
</comment>
<comment type="developmental stage">
    <text evidence="4">Expressed in embryos and adults of males and females.</text>
</comment>
<comment type="disruption phenotype">
    <text evidence="4">Failure of both actomyosin ring constriction and furrow ingression in male meiotic cells.</text>
</comment>
<comment type="similarity">
    <text evidence="6">Belongs to the NIBP family.</text>
</comment>
<comment type="sequence caution" evidence="6">
    <conflict type="frameshift">
        <sequence resource="EMBL-CDS" id="AAK92972"/>
    </conflict>
</comment>
<keyword id="KW-0963">Cytoplasm</keyword>
<keyword id="KW-0333">Golgi apparatus</keyword>
<keyword id="KW-0597">Phosphoprotein</keyword>
<keyword id="KW-1185">Reference proteome</keyword>
<accession>Q9VIL0</accession>
<accession>Q3KN61</accession>
<accession>Q961K0</accession>
<evidence type="ECO:0000256" key="1">
    <source>
        <dbReference type="SAM" id="MobiDB-lite"/>
    </source>
</evidence>
<evidence type="ECO:0000269" key="2">
    <source>
    </source>
</evidence>
<evidence type="ECO:0000269" key="3">
    <source>
    </source>
</evidence>
<evidence type="ECO:0000269" key="4">
    <source>
    </source>
</evidence>
<evidence type="ECO:0000303" key="5">
    <source>
    </source>
</evidence>
<evidence type="ECO:0000305" key="6"/>
<evidence type="ECO:0000312" key="7">
    <source>
        <dbReference type="FlyBase" id="FBgn0261787"/>
    </source>
</evidence>
<feature type="chain" id="PRO_0000372863" description="Protein brunelleschi">
    <location>
        <begin position="1"/>
        <end position="1320"/>
    </location>
</feature>
<feature type="region of interest" description="Disordered" evidence="1">
    <location>
        <begin position="313"/>
        <end position="411"/>
    </location>
</feature>
<feature type="region of interest" description="Disordered" evidence="1">
    <location>
        <begin position="923"/>
        <end position="954"/>
    </location>
</feature>
<feature type="compositionally biased region" description="Polar residues" evidence="1">
    <location>
        <begin position="314"/>
        <end position="327"/>
    </location>
</feature>
<feature type="compositionally biased region" description="Basic and acidic residues" evidence="1">
    <location>
        <begin position="329"/>
        <end position="340"/>
    </location>
</feature>
<feature type="compositionally biased region" description="Polar residues" evidence="1">
    <location>
        <begin position="345"/>
        <end position="361"/>
    </location>
</feature>
<feature type="compositionally biased region" description="Low complexity" evidence="1">
    <location>
        <begin position="362"/>
        <end position="400"/>
    </location>
</feature>
<feature type="compositionally biased region" description="Polar residues" evidence="1">
    <location>
        <begin position="945"/>
        <end position="954"/>
    </location>
</feature>
<feature type="modified residue" description="Phosphoserine" evidence="3">
    <location>
        <position position="317"/>
    </location>
</feature>
<feature type="modified residue" description="Phosphothreonine" evidence="3">
    <location>
        <position position="329"/>
    </location>
</feature>
<feature type="modified residue" description="Phosphoserine" evidence="2">
    <location>
        <position position="672"/>
    </location>
</feature>
<feature type="sequence conflict" description="In Ref. 3; ABA81812." evidence="6" ref="3">
    <original>H</original>
    <variation>Y</variation>
    <location>
        <position position="83"/>
    </location>
</feature>
<feature type="sequence conflict" description="In Ref. 3; ABA81812." evidence="6" ref="3">
    <original>V</original>
    <variation>I</variation>
    <location>
        <position position="204"/>
    </location>
</feature>
<feature type="sequence conflict" description="In Ref. 3; ABA81812." evidence="6" ref="3">
    <original>V</original>
    <variation>M</variation>
    <location>
        <position position="220"/>
    </location>
</feature>
<feature type="sequence conflict" description="In Ref. 3; ABA81812." evidence="6" ref="3">
    <original>S</original>
    <variation>C</variation>
    <location>
        <position position="354"/>
    </location>
</feature>
<name>BRUN_DROME</name>
<sequence length="1320" mass="145958">MRAAVGLMLSHGAGGMEPALSRPDYEQSALHHSCLLVLLRGVGPSRARVLQRAFEKVRRVNHIRVNDSSGHPRSIWIRFVHDHPVEHNDWGDFQTHRRLLGLVTIGKFDSQIELNELCRQHESLKVRYGSTLYESRAIFFGPDEQPLETIGEVLGPPAAGGRRLQDEFTTPSNFKAQAFFYREQDSCADLESRIGDFASALFWVLESRRLERSREKADKVSLLLAPFEKRDFVGLDMESRNNRKRCVGRVMKNLADLSLQAGLVDDALSLYHNANETLRSVGDSLWVGATEEGLCAASAMLLYPQMRETETLHRNSSLQEAGTSPLKNTPEKWRASDATKKISASDATANNVDSNQPQQRVTSNSSSCSSVSSLVTTATNSSASDTPTTSSSSTSTISAAPIPGHQRNGDLPGNILKAEEISNYYRKAIINYSKYRHAATIETEAALKASRICIEQNRPLDVAMFLQNILYINLSMSEAERVKRFEVITDLYQQIGYQRKAAFFQRLAALKHVQQGSQAPDWNQSYRLMLGSFTGYRLCLDPLEVIENAAGWPALQIDLVQTLITAARRLGHSALATRHMTFLLQTQWDNMSPTEQSEMAVQLQNLSAQCEGSPVPLVLENGTVIPPANLTDLPYCIDLQVKDLPAHLRPQRIKVAKADSGPFLFTPIHFNSVDRRDKKKDKNKIAFQWVQNDLSEVTVRLRNPLPFELPVTDMRLLTNGVVFESLPQTLVLQPHVPTYVALHGTPIETGQLDLQGYSTHTLGVKSNCRLKHMRGRSFPPNYVVDVIPALPRISVKTSLPQTATFSNMNSADIVVTSASLTLYNGESSSCTITITNESATLPLEHLEFSINSNVEQELQQKIFRIDEEAIKAHLPVPPQGTIEIIVDVFAEADFVCPQPPASLHSAAAPGDYGASSLTHYSSVSTSGHASLPSRVGSPHHRRNEPQNSSFRSTISGGPPSLAALTLHPGGGGGVGPSSLGSQYNQHIEAQVRFKYSGGDALTAGYCRQCAVSFNLELLPSVQITSWDVLPAEVASQFYLVLDISNLTAQEMSLNYTDTKNILIEAKESCRVPIPVDRCSLEKVVAARAAEVAENLERELCFRTQLLSFNDALSKLCSIHIAERVKIKWLLTGTDIQGIASLRGIVLSQSMVDLTAVSPLEWAISFQDTLVQPHNEIVCTVGQRSLLSIQLANQSLQPLRNLVLSIKFYQDYLNGMENYNLETRVAISGPNRIAIPLLEKQEQKEHTCSVIFFTPGRFKASIECTSNPQKQSEQPSSLLTRSCPAEAESVGQSVMFSSSYDEQQAHVWKFIPPIEVTVVEQ</sequence>
<proteinExistence type="evidence at protein level"/>